<gene>
    <name evidence="1" type="primary">rpmE</name>
    <name type="ordered locus">PFL_0441</name>
</gene>
<accession>Q4KJJ8</accession>
<evidence type="ECO:0000255" key="1">
    <source>
        <dbReference type="HAMAP-Rule" id="MF_00501"/>
    </source>
</evidence>
<evidence type="ECO:0000305" key="2"/>
<comment type="function">
    <text evidence="1">Binds the 23S rRNA.</text>
</comment>
<comment type="cofactor">
    <cofactor evidence="1">
        <name>Zn(2+)</name>
        <dbReference type="ChEBI" id="CHEBI:29105"/>
    </cofactor>
    <text evidence="1">Binds 1 zinc ion per subunit.</text>
</comment>
<comment type="subunit">
    <text evidence="1">Part of the 50S ribosomal subunit.</text>
</comment>
<comment type="similarity">
    <text evidence="1">Belongs to the bacterial ribosomal protein bL31 family. Type A subfamily.</text>
</comment>
<protein>
    <recommendedName>
        <fullName evidence="1">Large ribosomal subunit protein bL31</fullName>
    </recommendedName>
    <alternativeName>
        <fullName evidence="2">50S ribosomal protein L31</fullName>
    </alternativeName>
</protein>
<organism>
    <name type="scientific">Pseudomonas fluorescens (strain ATCC BAA-477 / NRRL B-23932 / Pf-5)</name>
    <dbReference type="NCBI Taxonomy" id="220664"/>
    <lineage>
        <taxon>Bacteria</taxon>
        <taxon>Pseudomonadati</taxon>
        <taxon>Pseudomonadota</taxon>
        <taxon>Gammaproteobacteria</taxon>
        <taxon>Pseudomonadales</taxon>
        <taxon>Pseudomonadaceae</taxon>
        <taxon>Pseudomonas</taxon>
    </lineage>
</organism>
<feature type="chain" id="PRO_0000259210" description="Large ribosomal subunit protein bL31">
    <location>
        <begin position="1"/>
        <end position="73"/>
    </location>
</feature>
<feature type="binding site" evidence="1">
    <location>
        <position position="16"/>
    </location>
    <ligand>
        <name>Zn(2+)</name>
        <dbReference type="ChEBI" id="CHEBI:29105"/>
    </ligand>
</feature>
<feature type="binding site" evidence="1">
    <location>
        <position position="18"/>
    </location>
    <ligand>
        <name>Zn(2+)</name>
        <dbReference type="ChEBI" id="CHEBI:29105"/>
    </ligand>
</feature>
<feature type="binding site" evidence="1">
    <location>
        <position position="37"/>
    </location>
    <ligand>
        <name>Zn(2+)</name>
        <dbReference type="ChEBI" id="CHEBI:29105"/>
    </ligand>
</feature>
<feature type="binding site" evidence="1">
    <location>
        <position position="40"/>
    </location>
    <ligand>
        <name>Zn(2+)</name>
        <dbReference type="ChEBI" id="CHEBI:29105"/>
    </ligand>
</feature>
<reference key="1">
    <citation type="journal article" date="2005" name="Nat. Biotechnol.">
        <title>Complete genome sequence of the plant commensal Pseudomonas fluorescens Pf-5.</title>
        <authorList>
            <person name="Paulsen I.T."/>
            <person name="Press C.M."/>
            <person name="Ravel J."/>
            <person name="Kobayashi D.Y."/>
            <person name="Myers G.S.A."/>
            <person name="Mavrodi D.V."/>
            <person name="DeBoy R.T."/>
            <person name="Seshadri R."/>
            <person name="Ren Q."/>
            <person name="Madupu R."/>
            <person name="Dodson R.J."/>
            <person name="Durkin A.S."/>
            <person name="Brinkac L.M."/>
            <person name="Daugherty S.C."/>
            <person name="Sullivan S.A."/>
            <person name="Rosovitz M.J."/>
            <person name="Gwinn M.L."/>
            <person name="Zhou L."/>
            <person name="Schneider D.J."/>
            <person name="Cartinhour S.W."/>
            <person name="Nelson W.C."/>
            <person name="Weidman J."/>
            <person name="Watkins K."/>
            <person name="Tran K."/>
            <person name="Khouri H."/>
            <person name="Pierson E.A."/>
            <person name="Pierson L.S. III"/>
            <person name="Thomashow L.S."/>
            <person name="Loper J.E."/>
        </authorList>
    </citation>
    <scope>NUCLEOTIDE SEQUENCE [LARGE SCALE GENOMIC DNA]</scope>
    <source>
        <strain>ATCC BAA-477 / NRRL B-23932 / Pf-5</strain>
    </source>
</reference>
<dbReference type="EMBL" id="CP000076">
    <property type="protein sequence ID" value="AAY95850.1"/>
    <property type="molecule type" value="Genomic_DNA"/>
</dbReference>
<dbReference type="RefSeq" id="WP_011058815.1">
    <property type="nucleotide sequence ID" value="NC_004129.6"/>
</dbReference>
<dbReference type="SMR" id="Q4KJJ8"/>
<dbReference type="STRING" id="220664.PFL_0441"/>
<dbReference type="GeneID" id="57473430"/>
<dbReference type="KEGG" id="pfl:PFL_0441"/>
<dbReference type="eggNOG" id="COG0254">
    <property type="taxonomic scope" value="Bacteria"/>
</dbReference>
<dbReference type="HOGENOM" id="CLU_114306_4_0_6"/>
<dbReference type="Proteomes" id="UP000008540">
    <property type="component" value="Chromosome"/>
</dbReference>
<dbReference type="GO" id="GO:1990904">
    <property type="term" value="C:ribonucleoprotein complex"/>
    <property type="evidence" value="ECO:0007669"/>
    <property type="project" value="UniProtKB-KW"/>
</dbReference>
<dbReference type="GO" id="GO:0005840">
    <property type="term" value="C:ribosome"/>
    <property type="evidence" value="ECO:0007669"/>
    <property type="project" value="UniProtKB-KW"/>
</dbReference>
<dbReference type="GO" id="GO:0046872">
    <property type="term" value="F:metal ion binding"/>
    <property type="evidence" value="ECO:0007669"/>
    <property type="project" value="UniProtKB-KW"/>
</dbReference>
<dbReference type="GO" id="GO:0019843">
    <property type="term" value="F:rRNA binding"/>
    <property type="evidence" value="ECO:0007669"/>
    <property type="project" value="UniProtKB-KW"/>
</dbReference>
<dbReference type="GO" id="GO:0003735">
    <property type="term" value="F:structural constituent of ribosome"/>
    <property type="evidence" value="ECO:0007669"/>
    <property type="project" value="InterPro"/>
</dbReference>
<dbReference type="GO" id="GO:0006412">
    <property type="term" value="P:translation"/>
    <property type="evidence" value="ECO:0007669"/>
    <property type="project" value="UniProtKB-UniRule"/>
</dbReference>
<dbReference type="Gene3D" id="4.10.830.30">
    <property type="entry name" value="Ribosomal protein L31"/>
    <property type="match status" value="1"/>
</dbReference>
<dbReference type="HAMAP" id="MF_00501">
    <property type="entry name" value="Ribosomal_bL31_1"/>
    <property type="match status" value="1"/>
</dbReference>
<dbReference type="InterPro" id="IPR034704">
    <property type="entry name" value="Ribosomal_bL28/bL31-like_sf"/>
</dbReference>
<dbReference type="InterPro" id="IPR002150">
    <property type="entry name" value="Ribosomal_bL31"/>
</dbReference>
<dbReference type="InterPro" id="IPR027491">
    <property type="entry name" value="Ribosomal_bL31_A"/>
</dbReference>
<dbReference type="InterPro" id="IPR042105">
    <property type="entry name" value="Ribosomal_bL31_sf"/>
</dbReference>
<dbReference type="NCBIfam" id="TIGR00105">
    <property type="entry name" value="L31"/>
    <property type="match status" value="1"/>
</dbReference>
<dbReference type="NCBIfam" id="NF000612">
    <property type="entry name" value="PRK00019.1"/>
    <property type="match status" value="1"/>
</dbReference>
<dbReference type="NCBIfam" id="NF001809">
    <property type="entry name" value="PRK00528.1"/>
    <property type="match status" value="1"/>
</dbReference>
<dbReference type="PANTHER" id="PTHR33280">
    <property type="entry name" value="50S RIBOSOMAL PROTEIN L31, CHLOROPLASTIC"/>
    <property type="match status" value="1"/>
</dbReference>
<dbReference type="PANTHER" id="PTHR33280:SF6">
    <property type="entry name" value="LARGE RIBOSOMAL SUBUNIT PROTEIN BL31A"/>
    <property type="match status" value="1"/>
</dbReference>
<dbReference type="Pfam" id="PF01197">
    <property type="entry name" value="Ribosomal_L31"/>
    <property type="match status" value="1"/>
</dbReference>
<dbReference type="PRINTS" id="PR01249">
    <property type="entry name" value="RIBOSOMALL31"/>
</dbReference>
<dbReference type="SUPFAM" id="SSF143800">
    <property type="entry name" value="L28p-like"/>
    <property type="match status" value="1"/>
</dbReference>
<dbReference type="PROSITE" id="PS01143">
    <property type="entry name" value="RIBOSOMAL_L31"/>
    <property type="match status" value="1"/>
</dbReference>
<name>RL31_PSEF5</name>
<keyword id="KW-0479">Metal-binding</keyword>
<keyword id="KW-0687">Ribonucleoprotein</keyword>
<keyword id="KW-0689">Ribosomal protein</keyword>
<keyword id="KW-0694">RNA-binding</keyword>
<keyword id="KW-0699">rRNA-binding</keyword>
<keyword id="KW-0862">Zinc</keyword>
<sequence>MKADIHPVYEAITATCSCGNVIETRSTLAKPLSLDVCNECHPFYTGKQKTLDVGGRVDKFKSRFGAFGATKKA</sequence>
<proteinExistence type="inferred from homology"/>